<dbReference type="EMBL" id="DQ499443">
    <property type="protein sequence ID" value="ABF72033.1"/>
    <property type="molecule type" value="mRNA"/>
</dbReference>
<dbReference type="RefSeq" id="NP_001038047.1">
    <property type="nucleotide sequence ID" value="NM_001044582.1"/>
</dbReference>
<dbReference type="SMR" id="Q19QU3"/>
<dbReference type="STRING" id="9823.ENSSSCP00000004096"/>
<dbReference type="PaxDb" id="9823-ENSSSCP00000004096"/>
<dbReference type="PeptideAtlas" id="Q19QU3"/>
<dbReference type="Ensembl" id="ENSSSCT00070031607.1">
    <property type="protein sequence ID" value="ENSSSCP00070026351.1"/>
    <property type="gene ID" value="ENSSSCG00070015892.1"/>
</dbReference>
<dbReference type="Ensembl" id="ENSSSCT00085016167">
    <property type="protein sequence ID" value="ENSSSCP00085011431"/>
    <property type="gene ID" value="ENSSSCG00085008615"/>
</dbReference>
<dbReference type="Ensembl" id="ENSSSCT00110005190">
    <property type="protein sequence ID" value="ENSSSCP00110003916"/>
    <property type="gene ID" value="ENSSSCG00110002542"/>
</dbReference>
<dbReference type="Ensembl" id="ENSSSCT00115019957">
    <property type="protein sequence ID" value="ENSSSCP00115018890"/>
    <property type="gene ID" value="ENSSSCG00115011571"/>
</dbReference>
<dbReference type="GeneID" id="733651"/>
<dbReference type="KEGG" id="ssc:733651"/>
<dbReference type="CTD" id="9406"/>
<dbReference type="eggNOG" id="KOG1995">
    <property type="taxonomic scope" value="Eukaryota"/>
</dbReference>
<dbReference type="HOGENOM" id="CLU_061048_0_0_1"/>
<dbReference type="InParanoid" id="Q19QU3"/>
<dbReference type="OMA" id="WICPDID"/>
<dbReference type="OrthoDB" id="1878647at2759"/>
<dbReference type="TreeFam" id="TF105996"/>
<dbReference type="Proteomes" id="UP000008227">
    <property type="component" value="Unplaced"/>
</dbReference>
<dbReference type="Proteomes" id="UP000314985">
    <property type="component" value="Chromosome 6"/>
</dbReference>
<dbReference type="Proteomes" id="UP000694570">
    <property type="component" value="Unplaced"/>
</dbReference>
<dbReference type="Proteomes" id="UP000694571">
    <property type="component" value="Unplaced"/>
</dbReference>
<dbReference type="Proteomes" id="UP000694720">
    <property type="component" value="Unplaced"/>
</dbReference>
<dbReference type="Proteomes" id="UP000694722">
    <property type="component" value="Unplaced"/>
</dbReference>
<dbReference type="Proteomes" id="UP000694723">
    <property type="component" value="Unplaced"/>
</dbReference>
<dbReference type="Proteomes" id="UP000694724">
    <property type="component" value="Unplaced"/>
</dbReference>
<dbReference type="Proteomes" id="UP000694725">
    <property type="component" value="Unplaced"/>
</dbReference>
<dbReference type="Proteomes" id="UP000694726">
    <property type="component" value="Unplaced"/>
</dbReference>
<dbReference type="Proteomes" id="UP000694727">
    <property type="component" value="Unplaced"/>
</dbReference>
<dbReference type="Proteomes" id="UP000694728">
    <property type="component" value="Unplaced"/>
</dbReference>
<dbReference type="GO" id="GO:0005634">
    <property type="term" value="C:nucleus"/>
    <property type="evidence" value="ECO:0007669"/>
    <property type="project" value="UniProtKB-SubCell"/>
</dbReference>
<dbReference type="GO" id="GO:0001530">
    <property type="term" value="F:lipopolysaccharide binding"/>
    <property type="evidence" value="ECO:0000318"/>
    <property type="project" value="GO_Central"/>
</dbReference>
<dbReference type="GO" id="GO:0003723">
    <property type="term" value="F:RNA binding"/>
    <property type="evidence" value="ECO:0007669"/>
    <property type="project" value="UniProtKB-KW"/>
</dbReference>
<dbReference type="GO" id="GO:0008270">
    <property type="term" value="F:zinc ion binding"/>
    <property type="evidence" value="ECO:0007669"/>
    <property type="project" value="UniProtKB-KW"/>
</dbReference>
<dbReference type="GO" id="GO:0006397">
    <property type="term" value="P:mRNA processing"/>
    <property type="evidence" value="ECO:0007669"/>
    <property type="project" value="UniProtKB-KW"/>
</dbReference>
<dbReference type="GO" id="GO:0008380">
    <property type="term" value="P:RNA splicing"/>
    <property type="evidence" value="ECO:0007669"/>
    <property type="project" value="UniProtKB-KW"/>
</dbReference>
<dbReference type="FunFam" id="4.10.1060.10:FF:000004">
    <property type="entry name" value="Zinc finger Ran-binding domain-containing protein 2"/>
    <property type="match status" value="1"/>
</dbReference>
<dbReference type="FunFam" id="4.10.1060.10:FF:000007">
    <property type="entry name" value="Zinc finger Ran-binding domain-containing protein 2"/>
    <property type="match status" value="1"/>
</dbReference>
<dbReference type="Gene3D" id="4.10.1060.10">
    <property type="entry name" value="Zinc finger, RanBP2-type"/>
    <property type="match status" value="2"/>
</dbReference>
<dbReference type="InterPro" id="IPR001876">
    <property type="entry name" value="Znf_RanBP2"/>
</dbReference>
<dbReference type="InterPro" id="IPR036443">
    <property type="entry name" value="Znf_RanBP2_sf"/>
</dbReference>
<dbReference type="InterPro" id="IPR017337">
    <property type="entry name" value="ZRANB2"/>
</dbReference>
<dbReference type="PANTHER" id="PTHR12999:SF17">
    <property type="entry name" value="ZINC FINGER RAN-BINDING DOMAIN-CONTAINING PROTEIN 2"/>
    <property type="match status" value="1"/>
</dbReference>
<dbReference type="PANTHER" id="PTHR12999">
    <property type="entry name" value="ZINC FINGER RAN-BINDING DOMAIN-CONTAINING PROTEIN 2 ZRANB2-RELATED"/>
    <property type="match status" value="1"/>
</dbReference>
<dbReference type="Pfam" id="PF00641">
    <property type="entry name" value="Zn_ribbon_RanBP"/>
    <property type="match status" value="2"/>
</dbReference>
<dbReference type="PIRSF" id="PIRSF037956">
    <property type="entry name" value="UCP037956_ZnF_Ran"/>
    <property type="match status" value="1"/>
</dbReference>
<dbReference type="SMART" id="SM00547">
    <property type="entry name" value="ZnF_RBZ"/>
    <property type="match status" value="2"/>
</dbReference>
<dbReference type="SUPFAM" id="SSF90209">
    <property type="entry name" value="Ran binding protein zinc finger-like"/>
    <property type="match status" value="2"/>
</dbReference>
<dbReference type="PROSITE" id="PS01358">
    <property type="entry name" value="ZF_RANBP2_1"/>
    <property type="match status" value="2"/>
</dbReference>
<dbReference type="PROSITE" id="PS50199">
    <property type="entry name" value="ZF_RANBP2_2"/>
    <property type="match status" value="2"/>
</dbReference>
<gene>
    <name type="primary">ZRANB2</name>
    <name type="synonym">ZNF265</name>
</gene>
<reference key="1">
    <citation type="journal article" date="2006" name="Anim. Genet.">
        <title>A gene-based radiation hybrid map of the pig chromosome 6q32 region associated with a QTL for fat deposition traits.</title>
        <authorList>
            <person name="Kim J.H."/>
            <person name="Lim H.T."/>
            <person name="Park E.W."/>
            <person name="Ovilo C."/>
            <person name="Lee J.H."/>
            <person name="Jeon J.T."/>
        </authorList>
    </citation>
    <scope>NUCLEOTIDE SEQUENCE [MRNA]</scope>
</reference>
<evidence type="ECO:0000250" key="1"/>
<evidence type="ECO:0000250" key="2">
    <source>
        <dbReference type="UniProtKB" id="O95218"/>
    </source>
</evidence>
<evidence type="ECO:0000250" key="3">
    <source>
        <dbReference type="UniProtKB" id="Q9R020"/>
    </source>
</evidence>
<evidence type="ECO:0000255" key="4">
    <source>
        <dbReference type="PROSITE-ProRule" id="PRU00322"/>
    </source>
</evidence>
<evidence type="ECO:0000256" key="5">
    <source>
        <dbReference type="SAM" id="MobiDB-lite"/>
    </source>
</evidence>
<evidence type="ECO:0000305" key="6"/>
<keyword id="KW-0007">Acetylation</keyword>
<keyword id="KW-0479">Metal-binding</keyword>
<keyword id="KW-0507">mRNA processing</keyword>
<keyword id="KW-0508">mRNA splicing</keyword>
<keyword id="KW-0539">Nucleus</keyword>
<keyword id="KW-0597">Phosphoprotein</keyword>
<keyword id="KW-1185">Reference proteome</keyword>
<keyword id="KW-0677">Repeat</keyword>
<keyword id="KW-0694">RNA-binding</keyword>
<keyword id="KW-0862">Zinc</keyword>
<keyword id="KW-0863">Zinc-finger</keyword>
<feature type="chain" id="PRO_0000262915" description="Zinc finger Ran-binding domain-containing protein 2">
    <location>
        <begin position="1"/>
        <end position="328"/>
    </location>
</feature>
<feature type="zinc finger region" description="RanBP2-type 1" evidence="4">
    <location>
        <begin position="9"/>
        <end position="40"/>
    </location>
</feature>
<feature type="zinc finger region" description="RanBP2-type 2" evidence="4">
    <location>
        <begin position="65"/>
        <end position="94"/>
    </location>
</feature>
<feature type="region of interest" description="Disordered" evidence="5">
    <location>
        <begin position="117"/>
        <end position="328"/>
    </location>
</feature>
<feature type="region of interest" description="Required for nuclear targeting" evidence="1">
    <location>
        <begin position="151"/>
        <end position="328"/>
    </location>
</feature>
<feature type="compositionally biased region" description="Acidic residues" evidence="5">
    <location>
        <begin position="150"/>
        <end position="163"/>
    </location>
</feature>
<feature type="compositionally biased region" description="Basic residues" evidence="5">
    <location>
        <begin position="196"/>
        <end position="210"/>
    </location>
</feature>
<feature type="compositionally biased region" description="Low complexity" evidence="5">
    <location>
        <begin position="211"/>
        <end position="224"/>
    </location>
</feature>
<feature type="compositionally biased region" description="Low complexity" evidence="5">
    <location>
        <begin position="232"/>
        <end position="242"/>
    </location>
</feature>
<feature type="compositionally biased region" description="Basic residues" evidence="5">
    <location>
        <begin position="251"/>
        <end position="271"/>
    </location>
</feature>
<feature type="compositionally biased region" description="Basic residues" evidence="5">
    <location>
        <begin position="297"/>
        <end position="312"/>
    </location>
</feature>
<feature type="compositionally biased region" description="Low complexity" evidence="5">
    <location>
        <begin position="313"/>
        <end position="328"/>
    </location>
</feature>
<feature type="modified residue" description="Phosphoserine" evidence="2">
    <location>
        <position position="9"/>
    </location>
</feature>
<feature type="modified residue" description="N6-acetyllysine" evidence="3">
    <location>
        <position position="18"/>
    </location>
</feature>
<feature type="modified residue" description="N6-acetyllysine" evidence="2">
    <location>
        <position position="54"/>
    </location>
</feature>
<feature type="modified residue" description="N6-acetyllysine" evidence="3">
    <location>
        <position position="92"/>
    </location>
</feature>
<feature type="modified residue" description="Phosphoserine" evidence="2">
    <location>
        <position position="120"/>
    </location>
</feature>
<feature type="modified residue" description="Phosphoserine" evidence="2">
    <location>
        <position position="153"/>
    </location>
</feature>
<feature type="modified residue" description="Phosphoserine" evidence="2">
    <location>
        <position position="181"/>
    </location>
</feature>
<feature type="modified residue" description="Phosphoserine" evidence="2">
    <location>
        <position position="188"/>
    </location>
</feature>
<feature type="modified residue" description="Phosphoserine" evidence="2">
    <location>
        <position position="193"/>
    </location>
</feature>
<proteinExistence type="evidence at transcript level"/>
<organism>
    <name type="scientific">Sus scrofa</name>
    <name type="common">Pig</name>
    <dbReference type="NCBI Taxonomy" id="9823"/>
    <lineage>
        <taxon>Eukaryota</taxon>
        <taxon>Metazoa</taxon>
        <taxon>Chordata</taxon>
        <taxon>Craniata</taxon>
        <taxon>Vertebrata</taxon>
        <taxon>Euteleostomi</taxon>
        <taxon>Mammalia</taxon>
        <taxon>Eutheria</taxon>
        <taxon>Laurasiatheria</taxon>
        <taxon>Artiodactyla</taxon>
        <taxon>Suina</taxon>
        <taxon>Suidae</taxon>
        <taxon>Sus</taxon>
    </lineage>
</organism>
<comment type="function">
    <text evidence="1 2">Splice factor required for alternative splicing of TRA2B/SFRS10 transcripts. Binds to ssRNA containing the consensus sequence 5'-AGGUAA-3' (By similarity). May interfere with constitutive 5'-splice site selection (By similarity).</text>
</comment>
<comment type="subunit">
    <text evidence="1">Interacts with the C-terminal half of SNRNP70, the Arg/Ser-rich domain of AKAP17A as well as with U2AF1 and CLK1.</text>
</comment>
<comment type="subcellular location">
    <subcellularLocation>
        <location evidence="1">Nucleus</location>
    </subcellularLocation>
</comment>
<comment type="domain">
    <text evidence="1">The RanBP2-type zinc fingers mediate binding to RNA.</text>
</comment>
<comment type="similarity">
    <text evidence="6">Belongs to the ZRANB2 family.</text>
</comment>
<name>ZRAB2_PIG</name>
<accession>Q19QU3</accession>
<protein>
    <recommendedName>
        <fullName>Zinc finger Ran-binding domain-containing protein 2</fullName>
    </recommendedName>
    <alternativeName>
        <fullName>Zinc finger protein 265</fullName>
    </alternativeName>
</protein>
<sequence length="328" mass="37111">MSTKNFRVSDGDWICPDKKCGNVNFARRTSCNRCGREKTTEAKMMKAGGTEIGKTLAEKSRGLFSANDWQCKTCSNVNWARRSECNMCNTPKYAKLEERTGYGGGFNERENVEYIEREESDGEYDEFGRKKKKYRGKAVGPASILKEVEDKESEGEEEDEDEDLSKYKLDEDEDEDDADLSKYNLDASEEEDSNKKKSNRRSRSKSRSSHSRSSSRSSSPSSSRSRSRSRSRSSSSSQSRSRSTSRERSRSRGSKSSSRSHRGSSSPRKRSYSSSSSSPERNRKRSRSRSSSTGDPKKRRTRSRSPERHHRSSSGSSHSGSRSSSKKK</sequence>